<accession>Q8S8S7</accession>
<gene>
    <name type="primary">PUB34</name>
    <name type="ordered locus">At2g19410</name>
    <name type="ORF">F27F23.21</name>
</gene>
<comment type="function">
    <text evidence="1">Functions as an E3 ubiquitin ligase.</text>
</comment>
<comment type="catalytic activity">
    <reaction>
        <text>L-seryl-[protein] + ATP = O-phospho-L-seryl-[protein] + ADP + H(+)</text>
        <dbReference type="Rhea" id="RHEA:17989"/>
        <dbReference type="Rhea" id="RHEA-COMP:9863"/>
        <dbReference type="Rhea" id="RHEA-COMP:11604"/>
        <dbReference type="ChEBI" id="CHEBI:15378"/>
        <dbReference type="ChEBI" id="CHEBI:29999"/>
        <dbReference type="ChEBI" id="CHEBI:30616"/>
        <dbReference type="ChEBI" id="CHEBI:83421"/>
        <dbReference type="ChEBI" id="CHEBI:456216"/>
    </reaction>
</comment>
<comment type="catalytic activity">
    <reaction>
        <text>L-threonyl-[protein] + ATP = O-phospho-L-threonyl-[protein] + ADP + H(+)</text>
        <dbReference type="Rhea" id="RHEA:46608"/>
        <dbReference type="Rhea" id="RHEA-COMP:11060"/>
        <dbReference type="Rhea" id="RHEA-COMP:11605"/>
        <dbReference type="ChEBI" id="CHEBI:15378"/>
        <dbReference type="ChEBI" id="CHEBI:30013"/>
        <dbReference type="ChEBI" id="CHEBI:30616"/>
        <dbReference type="ChEBI" id="CHEBI:61977"/>
        <dbReference type="ChEBI" id="CHEBI:456216"/>
    </reaction>
</comment>
<comment type="catalytic activity">
    <reaction>
        <text>S-ubiquitinyl-[E2 ubiquitin-conjugating enzyme]-L-cysteine + [acceptor protein]-L-lysine = [E2 ubiquitin-conjugating enzyme]-L-cysteine + N(6)-ubiquitinyl-[acceptor protein]-L-lysine.</text>
        <dbReference type="EC" id="2.3.2.27"/>
    </reaction>
</comment>
<comment type="pathway">
    <text>Protein modification; protein ubiquitination.</text>
</comment>
<comment type="similarity">
    <text evidence="3">Belongs to the protein kinase superfamily. Ser/Thr protein kinase family.</text>
</comment>
<sequence length="801" mass="90914">MVVMLTQEMSGGGGPKAEEGQLFVAVAVKGLIGDKLGGAGSRRAVRWAVDNLLPKADKFVMIHVIPTITSIPTPNILILMFTRMWVVTAGDRLPVEEVEESVVEMYVRDVKKEYETVFVPFLKMCKSTRSTKRYFRSRRTKGTGVPLTVLRYAPETCEVYIVCKDRITTKSMDPLINREPCTSPHAAATAHDFLRDWAASFHTLRSPTLPDPRQSTEAGTRRSASARELRFEALSLTCNKPKTPQSSKASSATTPEIFRRRRGSDIPQLNYSDFDKTCTKPQSNVENIVSEHRDSDRSPPETSRKSKKVEIEEEVERLKNELQSTVFKYKQACEELFSTQNKVKMLSTEYLNESKRVNNAVEKEELQRNTAALEKERYMKAVKEVETAKALLAREFCQRQIAEVNALRTYLEKKKVIDQLLGTDHRYRKYTIEEIVTATEGFSPEKVIGEGGYGKVYQCSLDSTPAAVKVVRLDTPEKKQEFLKEVEVLSQLRHPHVVLLLGACPENGCLVYEYLENGSLEEYIFHRKNKPPLPWFIRFRVIFEVACGLAFLHSSKPEPIVHRDLKPGNILLNRNYVSKIADVGLAKLVTDVAPDNVTMYRNSVLAGTLHYIDPEYHRTGTIRPKSDLYAFGIIILQLLTARNPSGIVPAVENAVKKGTLTEMLDKSVTDWPLAETEELARIGLKCAEFRCRDRPDLKSEVIPVLKRLVETANSKVKKEGSNLRAPSHYFCPILREIMEEPEIAADGFTYERKAILAWLEKHNISPVTRQKLDHFKLTPNHTLRSAIRDWKSRVRFSNVVV</sequence>
<protein>
    <recommendedName>
        <fullName>U-box domain-containing protein 34</fullName>
    </recommendedName>
    <alternativeName>
        <fullName>Plant U-box protein 34</fullName>
    </alternativeName>
    <domain>
        <recommendedName>
            <fullName>E3 ubiquitin ligase</fullName>
            <ecNumber>2.3.2.27</ecNumber>
        </recommendedName>
        <alternativeName>
            <fullName evidence="6">RING-type E3 ubiquitin transferase</fullName>
        </alternativeName>
    </domain>
    <domain>
        <recommendedName>
            <fullName>Serine/threonine-protein kinase</fullName>
            <ecNumber>2.7.11.-</ecNumber>
        </recommendedName>
    </domain>
</protein>
<name>PUB34_ARATH</name>
<keyword id="KW-0067">ATP-binding</keyword>
<keyword id="KW-0175">Coiled coil</keyword>
<keyword id="KW-0418">Kinase</keyword>
<keyword id="KW-0547">Nucleotide-binding</keyword>
<keyword id="KW-1185">Reference proteome</keyword>
<keyword id="KW-0723">Serine/threonine-protein kinase</keyword>
<keyword id="KW-0808">Transferase</keyword>
<keyword id="KW-0833">Ubl conjugation pathway</keyword>
<evidence type="ECO:0000250" key="1"/>
<evidence type="ECO:0000255" key="2"/>
<evidence type="ECO:0000255" key="3">
    <source>
        <dbReference type="PROSITE-ProRule" id="PRU00159"/>
    </source>
</evidence>
<evidence type="ECO:0000255" key="4">
    <source>
        <dbReference type="PROSITE-ProRule" id="PRU10027"/>
    </source>
</evidence>
<evidence type="ECO:0000256" key="5">
    <source>
        <dbReference type="SAM" id="MobiDB-lite"/>
    </source>
</evidence>
<evidence type="ECO:0000305" key="6"/>
<dbReference type="EC" id="2.3.2.27"/>
<dbReference type="EC" id="2.7.11.-"/>
<dbReference type="EMBL" id="AC003058">
    <property type="protein sequence ID" value="AAM14871.1"/>
    <property type="molecule type" value="Genomic_DNA"/>
</dbReference>
<dbReference type="EMBL" id="CP002685">
    <property type="protein sequence ID" value="AEC06878.1"/>
    <property type="molecule type" value="Genomic_DNA"/>
</dbReference>
<dbReference type="PIR" id="T01289">
    <property type="entry name" value="T01289"/>
</dbReference>
<dbReference type="RefSeq" id="NP_179531.1">
    <property type="nucleotide sequence ID" value="NM_127499.2"/>
</dbReference>
<dbReference type="SMR" id="Q8S8S7"/>
<dbReference type="STRING" id="3702.Q8S8S7"/>
<dbReference type="iPTMnet" id="Q8S8S7"/>
<dbReference type="PaxDb" id="3702-AT2G19410.1"/>
<dbReference type="EnsemblPlants" id="AT2G19410.1">
    <property type="protein sequence ID" value="AT2G19410.1"/>
    <property type="gene ID" value="AT2G19410"/>
</dbReference>
<dbReference type="GeneID" id="816460"/>
<dbReference type="Gramene" id="AT2G19410.1">
    <property type="protein sequence ID" value="AT2G19410.1"/>
    <property type="gene ID" value="AT2G19410"/>
</dbReference>
<dbReference type="KEGG" id="ath:AT2G19410"/>
<dbReference type="Araport" id="AT2G19410"/>
<dbReference type="TAIR" id="AT2G19410"/>
<dbReference type="eggNOG" id="ENOG502QQ92">
    <property type="taxonomic scope" value="Eukaryota"/>
</dbReference>
<dbReference type="HOGENOM" id="CLU_000288_153_3_1"/>
<dbReference type="InParanoid" id="Q8S8S7"/>
<dbReference type="OrthoDB" id="10064100at2759"/>
<dbReference type="PhylomeDB" id="Q8S8S7"/>
<dbReference type="UniPathway" id="UPA00143"/>
<dbReference type="PRO" id="PR:Q8S8S7"/>
<dbReference type="Proteomes" id="UP000006548">
    <property type="component" value="Chromosome 2"/>
</dbReference>
<dbReference type="ExpressionAtlas" id="Q8S8S7">
    <property type="expression patterns" value="baseline and differential"/>
</dbReference>
<dbReference type="GO" id="GO:0005524">
    <property type="term" value="F:ATP binding"/>
    <property type="evidence" value="ECO:0007669"/>
    <property type="project" value="UniProtKB-KW"/>
</dbReference>
<dbReference type="GO" id="GO:0106310">
    <property type="term" value="F:protein serine kinase activity"/>
    <property type="evidence" value="ECO:0007669"/>
    <property type="project" value="RHEA"/>
</dbReference>
<dbReference type="GO" id="GO:0004674">
    <property type="term" value="F:protein serine/threonine kinase activity"/>
    <property type="evidence" value="ECO:0007669"/>
    <property type="project" value="UniProtKB-KW"/>
</dbReference>
<dbReference type="GO" id="GO:0004842">
    <property type="term" value="F:ubiquitin-protein transferase activity"/>
    <property type="evidence" value="ECO:0007669"/>
    <property type="project" value="InterPro"/>
</dbReference>
<dbReference type="GO" id="GO:0016567">
    <property type="term" value="P:protein ubiquitination"/>
    <property type="evidence" value="ECO:0007669"/>
    <property type="project" value="UniProtKB-UniPathway"/>
</dbReference>
<dbReference type="CDD" id="cd16655">
    <property type="entry name" value="RING-Ubox_WDSUB1-like"/>
    <property type="match status" value="1"/>
</dbReference>
<dbReference type="Gene3D" id="3.30.200.20">
    <property type="entry name" value="Phosphorylase Kinase, domain 1"/>
    <property type="match status" value="1"/>
</dbReference>
<dbReference type="Gene3D" id="1.10.510.10">
    <property type="entry name" value="Transferase(Phosphotransferase) domain 1"/>
    <property type="match status" value="1"/>
</dbReference>
<dbReference type="Gene3D" id="3.30.40.10">
    <property type="entry name" value="Zinc/RING finger domain, C3HC4 (zinc finger)"/>
    <property type="match status" value="1"/>
</dbReference>
<dbReference type="InterPro" id="IPR011009">
    <property type="entry name" value="Kinase-like_dom_sf"/>
</dbReference>
<dbReference type="InterPro" id="IPR000719">
    <property type="entry name" value="Prot_kinase_dom"/>
</dbReference>
<dbReference type="InterPro" id="IPR017441">
    <property type="entry name" value="Protein_kinase_ATP_BS"/>
</dbReference>
<dbReference type="InterPro" id="IPR001245">
    <property type="entry name" value="Ser-Thr/Tyr_kinase_cat_dom"/>
</dbReference>
<dbReference type="InterPro" id="IPR008271">
    <property type="entry name" value="Ser/Thr_kinase_AS"/>
</dbReference>
<dbReference type="InterPro" id="IPR051348">
    <property type="entry name" value="U-box_ubiquitin_ligases"/>
</dbReference>
<dbReference type="InterPro" id="IPR003613">
    <property type="entry name" value="Ubox_domain"/>
</dbReference>
<dbReference type="InterPro" id="IPR013083">
    <property type="entry name" value="Znf_RING/FYVE/PHD"/>
</dbReference>
<dbReference type="PANTHER" id="PTHR45647">
    <property type="entry name" value="OS02G0152300 PROTEIN"/>
    <property type="match status" value="1"/>
</dbReference>
<dbReference type="PANTHER" id="PTHR45647:SF145">
    <property type="entry name" value="U-BOX DOMAIN-CONTAINING PROTEIN 34"/>
    <property type="match status" value="1"/>
</dbReference>
<dbReference type="Pfam" id="PF07714">
    <property type="entry name" value="PK_Tyr_Ser-Thr"/>
    <property type="match status" value="1"/>
</dbReference>
<dbReference type="Pfam" id="PF04564">
    <property type="entry name" value="U-box"/>
    <property type="match status" value="1"/>
</dbReference>
<dbReference type="SMART" id="SM00220">
    <property type="entry name" value="S_TKc"/>
    <property type="match status" value="1"/>
</dbReference>
<dbReference type="SMART" id="SM00504">
    <property type="entry name" value="Ubox"/>
    <property type="match status" value="1"/>
</dbReference>
<dbReference type="SUPFAM" id="SSF56112">
    <property type="entry name" value="Protein kinase-like (PK-like)"/>
    <property type="match status" value="1"/>
</dbReference>
<dbReference type="SUPFAM" id="SSF57850">
    <property type="entry name" value="RING/U-box"/>
    <property type="match status" value="1"/>
</dbReference>
<dbReference type="PROSITE" id="PS00107">
    <property type="entry name" value="PROTEIN_KINASE_ATP"/>
    <property type="match status" value="1"/>
</dbReference>
<dbReference type="PROSITE" id="PS50011">
    <property type="entry name" value="PROTEIN_KINASE_DOM"/>
    <property type="match status" value="1"/>
</dbReference>
<dbReference type="PROSITE" id="PS00108">
    <property type="entry name" value="PROTEIN_KINASE_ST"/>
    <property type="match status" value="1"/>
</dbReference>
<dbReference type="PROSITE" id="PS51698">
    <property type="entry name" value="U_BOX"/>
    <property type="match status" value="1"/>
</dbReference>
<reference key="1">
    <citation type="journal article" date="1999" name="Nature">
        <title>Sequence and analysis of chromosome 2 of the plant Arabidopsis thaliana.</title>
        <authorList>
            <person name="Lin X."/>
            <person name="Kaul S."/>
            <person name="Rounsley S.D."/>
            <person name="Shea T.P."/>
            <person name="Benito M.-I."/>
            <person name="Town C.D."/>
            <person name="Fujii C.Y."/>
            <person name="Mason T.M."/>
            <person name="Bowman C.L."/>
            <person name="Barnstead M.E."/>
            <person name="Feldblyum T.V."/>
            <person name="Buell C.R."/>
            <person name="Ketchum K.A."/>
            <person name="Lee J.J."/>
            <person name="Ronning C.M."/>
            <person name="Koo H.L."/>
            <person name="Moffat K.S."/>
            <person name="Cronin L.A."/>
            <person name="Shen M."/>
            <person name="Pai G."/>
            <person name="Van Aken S."/>
            <person name="Umayam L."/>
            <person name="Tallon L.J."/>
            <person name="Gill J.E."/>
            <person name="Adams M.D."/>
            <person name="Carrera A.J."/>
            <person name="Creasy T.H."/>
            <person name="Goodman H.M."/>
            <person name="Somerville C.R."/>
            <person name="Copenhaver G.P."/>
            <person name="Preuss D."/>
            <person name="Nierman W.C."/>
            <person name="White O."/>
            <person name="Eisen J.A."/>
            <person name="Salzberg S.L."/>
            <person name="Fraser C.M."/>
            <person name="Venter J.C."/>
        </authorList>
    </citation>
    <scope>NUCLEOTIDE SEQUENCE [LARGE SCALE GENOMIC DNA]</scope>
    <source>
        <strain>cv. Columbia</strain>
    </source>
</reference>
<reference key="2">
    <citation type="journal article" date="2017" name="Plant J.">
        <title>Araport11: a complete reannotation of the Arabidopsis thaliana reference genome.</title>
        <authorList>
            <person name="Cheng C.Y."/>
            <person name="Krishnakumar V."/>
            <person name="Chan A.P."/>
            <person name="Thibaud-Nissen F."/>
            <person name="Schobel S."/>
            <person name="Town C.D."/>
        </authorList>
    </citation>
    <scope>GENOME REANNOTATION</scope>
    <source>
        <strain>cv. Columbia</strain>
    </source>
</reference>
<reference key="3">
    <citation type="journal article" date="2001" name="Trends Plant Sci.">
        <title>The U-box protein family in plants.</title>
        <authorList>
            <person name="Azevedo C."/>
            <person name="Santos-Rosa M.J."/>
            <person name="Shirasu K."/>
        </authorList>
    </citation>
    <scope>GENE FAMILY ORGANIZATION</scope>
    <scope>NOMENCLATURE</scope>
</reference>
<proteinExistence type="inferred from homology"/>
<feature type="chain" id="PRO_0000322141" description="U-box domain-containing protein 34">
    <location>
        <begin position="1"/>
        <end position="801"/>
    </location>
</feature>
<feature type="domain" description="Protein kinase" evidence="3">
    <location>
        <begin position="442"/>
        <end position="705"/>
    </location>
</feature>
<feature type="domain" description="U-box">
    <location>
        <begin position="724"/>
        <end position="797"/>
    </location>
</feature>
<feature type="region of interest" description="Disordered" evidence="5">
    <location>
        <begin position="205"/>
        <end position="309"/>
    </location>
</feature>
<feature type="coiled-coil region" evidence="2">
    <location>
        <begin position="301"/>
        <end position="395"/>
    </location>
</feature>
<feature type="compositionally biased region" description="Polar residues" evidence="5">
    <location>
        <begin position="236"/>
        <end position="254"/>
    </location>
</feature>
<feature type="compositionally biased region" description="Basic and acidic residues" evidence="5">
    <location>
        <begin position="289"/>
        <end position="309"/>
    </location>
</feature>
<feature type="active site" description="Proton acceptor" evidence="3 4">
    <location>
        <position position="564"/>
    </location>
</feature>
<feature type="binding site" evidence="3">
    <location>
        <begin position="448"/>
        <end position="456"/>
    </location>
    <ligand>
        <name>ATP</name>
        <dbReference type="ChEBI" id="CHEBI:30616"/>
    </ligand>
</feature>
<feature type="binding site" evidence="3">
    <location>
        <position position="469"/>
    </location>
    <ligand>
        <name>ATP</name>
        <dbReference type="ChEBI" id="CHEBI:30616"/>
    </ligand>
</feature>
<organism>
    <name type="scientific">Arabidopsis thaliana</name>
    <name type="common">Mouse-ear cress</name>
    <dbReference type="NCBI Taxonomy" id="3702"/>
    <lineage>
        <taxon>Eukaryota</taxon>
        <taxon>Viridiplantae</taxon>
        <taxon>Streptophyta</taxon>
        <taxon>Embryophyta</taxon>
        <taxon>Tracheophyta</taxon>
        <taxon>Spermatophyta</taxon>
        <taxon>Magnoliopsida</taxon>
        <taxon>eudicotyledons</taxon>
        <taxon>Gunneridae</taxon>
        <taxon>Pentapetalae</taxon>
        <taxon>rosids</taxon>
        <taxon>malvids</taxon>
        <taxon>Brassicales</taxon>
        <taxon>Brassicaceae</taxon>
        <taxon>Camelineae</taxon>
        <taxon>Arabidopsis</taxon>
    </lineage>
</organism>